<evidence type="ECO:0000250" key="1"/>
<evidence type="ECO:0000250" key="2">
    <source>
        <dbReference type="UniProtKB" id="P18893"/>
    </source>
</evidence>
<evidence type="ECO:0000250" key="3">
    <source>
        <dbReference type="UniProtKB" id="P22301"/>
    </source>
</evidence>
<evidence type="ECO:0000255" key="4"/>
<evidence type="ECO:0000305" key="5"/>
<proteinExistence type="evidence at transcript level"/>
<organism>
    <name type="scientific">Macaca fascicularis</name>
    <name type="common">Crab-eating macaque</name>
    <name type="synonym">Cynomolgus monkey</name>
    <dbReference type="NCBI Taxonomy" id="9541"/>
    <lineage>
        <taxon>Eukaryota</taxon>
        <taxon>Metazoa</taxon>
        <taxon>Chordata</taxon>
        <taxon>Craniata</taxon>
        <taxon>Vertebrata</taxon>
        <taxon>Euteleostomi</taxon>
        <taxon>Mammalia</taxon>
        <taxon>Eutheria</taxon>
        <taxon>Euarchontoglires</taxon>
        <taxon>Primates</taxon>
        <taxon>Haplorrhini</taxon>
        <taxon>Catarrhini</taxon>
        <taxon>Cercopithecidae</taxon>
        <taxon>Cercopithecinae</taxon>
        <taxon>Macaca</taxon>
    </lineage>
</organism>
<gene>
    <name type="primary">IL10</name>
</gene>
<name>IL10_MACFA</name>
<reference key="1">
    <citation type="submission" date="1997-02" db="EMBL/GenBank/DDBJ databases">
        <title>Molecular cloning and expression of cynomolgus monkey IL-10.</title>
        <authorList>
            <person name="Tatsumi M."/>
        </authorList>
    </citation>
    <scope>NUCLEOTIDE SEQUENCE [MRNA]</scope>
</reference>
<feature type="signal peptide" evidence="4">
    <location>
        <begin position="1"/>
        <end position="18"/>
    </location>
</feature>
<feature type="chain" id="PRO_0000015362" description="Interleukin-10">
    <location>
        <begin position="19"/>
        <end position="178"/>
    </location>
</feature>
<feature type="glycosylation site" description="N-linked (GlcNAc...) asparagine" evidence="4">
    <location>
        <position position="134"/>
    </location>
</feature>
<feature type="disulfide bond" evidence="1">
    <location>
        <begin position="30"/>
        <end position="126"/>
    </location>
</feature>
<feature type="disulfide bond" evidence="1">
    <location>
        <begin position="80"/>
        <end position="132"/>
    </location>
</feature>
<comment type="function">
    <text evidence="2 3">Major immune regulatory cytokine that acts on many cells of the immune system where it has profound anti-inflammatory functions, limiting excessive tissue disruption caused by inflammation. Mechanistically, IL10 binds to its heterotetrameric receptor comprising IL10RA and IL10RB leading to JAK1 and STAT2-mediated phosphorylation of STAT3. In turn, STAT3 translocates to the nucleus where it drives expression of anti-inflammatory mediators. Targets antigen-presenting cells (APCs) such as macrophages and monocytes and inhibits their release of pro-inflammatory cytokines including granulocyte-macrophage colony-stimulating factor /GM-CSF, granulocyte colony-stimulating factor/G-CSF, IL-1 alpha, IL-1 beta, IL-6, IL-8 and TNF-alpha. Also interferes with antigen presentation by reducing the expression of MHC-class II and co-stimulatory molecules, thereby inhibiting their ability to induce T cell activation (By similarity). In addition, controls the inflammatory response of macrophages by reprogramming essential metabolic pathways including mTOR signaling (By similarity).</text>
</comment>
<comment type="subunit">
    <text evidence="3">Homodimer. Interacts with IL10RA and IL10RB.</text>
</comment>
<comment type="subcellular location">
    <subcellularLocation>
        <location evidence="3">Secreted</location>
    </subcellularLocation>
</comment>
<comment type="similarity">
    <text evidence="5">Belongs to the IL-10 family.</text>
</comment>
<sequence>MHSSALLCCLVLLTGVRASPGQGTQSENSCTRFPGNLPHMLRDLRDAFSRVKTFFQMKDQLDNILLKESLLEDFKGYLGCQALSEMIQFYLEEVMPQAENHDPDIKEHVNSLGENLKTLRLRLRRCHRFLPCENKSKAVEQVKNAFSKLQEKGVYKAMSEFDIFINYIEAYMTMKIRN</sequence>
<dbReference type="EMBL" id="AB000514">
    <property type="protein sequence ID" value="BAA19132.1"/>
    <property type="molecule type" value="mRNA"/>
</dbReference>
<dbReference type="SMR" id="P79338"/>
<dbReference type="STRING" id="9541.ENSMFAP00000032732"/>
<dbReference type="GlyCosmos" id="P79338">
    <property type="glycosylation" value="1 site, No reported glycans"/>
</dbReference>
<dbReference type="eggNOG" id="ENOG502S22U">
    <property type="taxonomic scope" value="Eukaryota"/>
</dbReference>
<dbReference type="Proteomes" id="UP000233100">
    <property type="component" value="Unplaced"/>
</dbReference>
<dbReference type="GO" id="GO:0005615">
    <property type="term" value="C:extracellular space"/>
    <property type="evidence" value="ECO:0000250"/>
    <property type="project" value="UniProtKB"/>
</dbReference>
<dbReference type="GO" id="GO:0005125">
    <property type="term" value="F:cytokine activity"/>
    <property type="evidence" value="ECO:0007669"/>
    <property type="project" value="UniProtKB-KW"/>
</dbReference>
<dbReference type="GO" id="GO:0006955">
    <property type="term" value="P:immune response"/>
    <property type="evidence" value="ECO:0007669"/>
    <property type="project" value="InterPro"/>
</dbReference>
<dbReference type="GO" id="GO:0030889">
    <property type="term" value="P:negative regulation of B cell proliferation"/>
    <property type="evidence" value="ECO:0000250"/>
    <property type="project" value="UniProtKB"/>
</dbReference>
<dbReference type="GO" id="GO:0002719">
    <property type="term" value="P:negative regulation of cytokine production involved in immune response"/>
    <property type="evidence" value="ECO:0000250"/>
    <property type="project" value="UniProtKB"/>
</dbReference>
<dbReference type="GO" id="GO:0050728">
    <property type="term" value="P:negative regulation of inflammatory response"/>
    <property type="evidence" value="ECO:0000250"/>
    <property type="project" value="UniProtKB"/>
</dbReference>
<dbReference type="GO" id="GO:0032715">
    <property type="term" value="P:negative regulation of interleukin-6 production"/>
    <property type="evidence" value="ECO:0000250"/>
    <property type="project" value="UniProtKB"/>
</dbReference>
<dbReference type="GO" id="GO:0051045">
    <property type="term" value="P:negative regulation of membrane protein ectodomain proteolysis"/>
    <property type="evidence" value="ECO:0000250"/>
    <property type="project" value="UniProtKB"/>
</dbReference>
<dbReference type="GO" id="GO:0002904">
    <property type="term" value="P:positive regulation of B cell apoptotic process"/>
    <property type="evidence" value="ECO:0000250"/>
    <property type="project" value="UniProtKB"/>
</dbReference>
<dbReference type="GO" id="GO:0001819">
    <property type="term" value="P:positive regulation of cytokine production"/>
    <property type="evidence" value="ECO:0000250"/>
    <property type="project" value="UniProtKB"/>
</dbReference>
<dbReference type="GO" id="GO:0051091">
    <property type="term" value="P:positive regulation of DNA-binding transcription factor activity"/>
    <property type="evidence" value="ECO:0000250"/>
    <property type="project" value="UniProtKB"/>
</dbReference>
<dbReference type="GO" id="GO:0045893">
    <property type="term" value="P:positive regulation of DNA-templated transcription"/>
    <property type="evidence" value="ECO:0000250"/>
    <property type="project" value="UniProtKB"/>
</dbReference>
<dbReference type="GO" id="GO:0051384">
    <property type="term" value="P:response to glucocorticoid"/>
    <property type="evidence" value="ECO:0000250"/>
    <property type="project" value="UniProtKB"/>
</dbReference>
<dbReference type="GO" id="GO:0002237">
    <property type="term" value="P:response to molecule of bacterial origin"/>
    <property type="evidence" value="ECO:0000250"/>
    <property type="project" value="UniProtKB"/>
</dbReference>
<dbReference type="FunFam" id="1.20.1250.10:FF:000011">
    <property type="entry name" value="Interleukin-10"/>
    <property type="match status" value="1"/>
</dbReference>
<dbReference type="Gene3D" id="1.20.1250.10">
    <property type="match status" value="1"/>
</dbReference>
<dbReference type="InterPro" id="IPR009079">
    <property type="entry name" value="4_helix_cytokine-like_core"/>
</dbReference>
<dbReference type="InterPro" id="IPR000098">
    <property type="entry name" value="IL-10"/>
</dbReference>
<dbReference type="InterPro" id="IPR020443">
    <property type="entry name" value="IL-10/19/20/24/26"/>
</dbReference>
<dbReference type="InterPro" id="IPR020423">
    <property type="entry name" value="IL-10_CS"/>
</dbReference>
<dbReference type="PANTHER" id="PTHR48482:SF5">
    <property type="entry name" value="INTERLEUKIN-10"/>
    <property type="match status" value="1"/>
</dbReference>
<dbReference type="PANTHER" id="PTHR48482">
    <property type="entry name" value="INTERLEUKIN-19-RELATED"/>
    <property type="match status" value="1"/>
</dbReference>
<dbReference type="Pfam" id="PF00726">
    <property type="entry name" value="IL10"/>
    <property type="match status" value="1"/>
</dbReference>
<dbReference type="PRINTS" id="PR01294">
    <property type="entry name" value="INTRLEUKIN10"/>
</dbReference>
<dbReference type="SMART" id="SM00188">
    <property type="entry name" value="IL10"/>
    <property type="match status" value="1"/>
</dbReference>
<dbReference type="SUPFAM" id="SSF47266">
    <property type="entry name" value="4-helical cytokines"/>
    <property type="match status" value="1"/>
</dbReference>
<dbReference type="PROSITE" id="PS00520">
    <property type="entry name" value="INTERLEUKIN_10"/>
    <property type="match status" value="1"/>
</dbReference>
<keyword id="KW-0202">Cytokine</keyword>
<keyword id="KW-1015">Disulfide bond</keyword>
<keyword id="KW-0325">Glycoprotein</keyword>
<keyword id="KW-1185">Reference proteome</keyword>
<keyword id="KW-0964">Secreted</keyword>
<keyword id="KW-0732">Signal</keyword>
<accession>P79338</accession>
<protein>
    <recommendedName>
        <fullName>Interleukin-10</fullName>
        <shortName>IL-10</shortName>
    </recommendedName>
    <alternativeName>
        <fullName>Cytokine synthesis inhibitory factor</fullName>
        <shortName>CSIF</shortName>
    </alternativeName>
</protein>